<name>ATG1_PYRO7</name>
<accession>Q52EB3</accession>
<accession>G4N7K2</accession>
<accession>Q2Q439</accession>
<gene>
    <name evidence="7" type="primary">ATG1</name>
    <name evidence="6" type="ORF">MGG_06393</name>
</gene>
<evidence type="ECO:0000250" key="1">
    <source>
        <dbReference type="UniProtKB" id="P53104"/>
    </source>
</evidence>
<evidence type="ECO:0000255" key="2">
    <source>
        <dbReference type="PROSITE-ProRule" id="PRU00159"/>
    </source>
</evidence>
<evidence type="ECO:0000255" key="3">
    <source>
        <dbReference type="PROSITE-ProRule" id="PRU10027"/>
    </source>
</evidence>
<evidence type="ECO:0000256" key="4">
    <source>
        <dbReference type="SAM" id="MobiDB-lite"/>
    </source>
</evidence>
<evidence type="ECO:0000269" key="5">
    <source>
    </source>
</evidence>
<evidence type="ECO:0000303" key="6">
    <source>
    </source>
</evidence>
<evidence type="ECO:0000303" key="7">
    <source>
    </source>
</evidence>
<organism>
    <name type="scientific">Pyricularia oryzae (strain 70-15 / ATCC MYA-4617 / FGSC 8958)</name>
    <name type="common">Rice blast fungus</name>
    <name type="synonym">Magnaporthe oryzae</name>
    <dbReference type="NCBI Taxonomy" id="242507"/>
    <lineage>
        <taxon>Eukaryota</taxon>
        <taxon>Fungi</taxon>
        <taxon>Dikarya</taxon>
        <taxon>Ascomycota</taxon>
        <taxon>Pezizomycotina</taxon>
        <taxon>Sordariomycetes</taxon>
        <taxon>Sordariomycetidae</taxon>
        <taxon>Magnaporthales</taxon>
        <taxon>Pyriculariaceae</taxon>
        <taxon>Pyricularia</taxon>
    </lineage>
</organism>
<protein>
    <recommendedName>
        <fullName evidence="7">Serine/threonine-protein kinase ATG1</fullName>
        <ecNumber evidence="1">2.7.11.1</ecNumber>
    </recommendedName>
    <alternativeName>
        <fullName evidence="1">Autophagy-related protein 1</fullName>
    </alternativeName>
</protein>
<sequence length="982" mass="107443">MADRSARRARPGDDSVGQFVIGAEIGKGSFAQVYMGKHKVSGAAVAIKSVELARLNKKLKENLYGEINILKTLRHPHIVALHDCVESATHINLMMEYCELGDLSLFIKKREKLSTNPATHDMARKYPNVPNSGLNEVVIRHFLKQLSSALKFLRESNLVHRDVKPQNLLLLPSPEFREVNKLARPILTASQDSLVPVAGLASLPMLKLADFGFARVLPSTSLAETLCGSPLYMAPEILRYERYDAKADLWSVGTVLFEMIVGRPPFRASNHVELLRKIEAAEDVIKFPRETTISSEMKGLTRALLKRNPVERISFENFFAHPVIISSIPGLVEDDIPKPEASEQRSSSKDTRAASKSDDPIASPRKYSFRRHPTDNDQIRDQFRRVEPPSSAAESAPSRQTSAFSGIAAEARKQAAAEASARTGQSSRNEPGDNLVPRRPQAQPSTSAPSKPGLYEERRRGISNASLNRSNRESSSPTSAALANDSARAPPQQTSRRVQAEEREKAAQDVAFERDYVVVEKKHVEVNAFADEMAANPRLGGQGTPLSPKSGQIVRRATQQGNPTSTTGAIPAAPSRTMQIAQGTQRHYHERGTSLSASPGSTASFITKAIQDASLRLLGIKYPAGLTKGASPPELYNPYPAYPTPSPPVGLISSGKQSTPVDEDARVAQLIEEHATRSDVVYGFAEVKYKQLVPLAPSAEHGLGGTTLEDMPTGEEDVLTVEAIVSLSEEALVLYVKALTLLAKSMDIASLWWARKNRGDQANNALSSTRDSVNTQTLSLRINSAVQWVRSRFNEVLEKAEVVRLRLMDAQKRLPDDHPSHPSNHPQGSESVNGASAEGVFLTVGVTAEKLMYDRALEMSRTAAINEITNEDLAGCEISYVTAIRMLEAVLDNDEDAPKRRLSANMDDSGGDGEDGHAEINADDQQAVQKMIHMIRSRLTSVRSKVRMISNASKAQQQSQPQSLIRRRSGDVTPRSVPSYSS</sequence>
<dbReference type="EC" id="2.7.11.1" evidence="1"/>
<dbReference type="EMBL" id="DQ224381">
    <property type="protein sequence ID" value="ABB46201.1"/>
    <property type="molecule type" value="mRNA"/>
</dbReference>
<dbReference type="EMBL" id="CM001234">
    <property type="protein sequence ID" value="EHA50859.1"/>
    <property type="molecule type" value="Genomic_DNA"/>
</dbReference>
<dbReference type="RefSeq" id="XP_003717178.1">
    <property type="nucleotide sequence ID" value="XM_003717130.1"/>
</dbReference>
<dbReference type="SMR" id="Q52EB3"/>
<dbReference type="FunCoup" id="Q52EB3">
    <property type="interactions" value="73"/>
</dbReference>
<dbReference type="STRING" id="242507.Q52EB3"/>
<dbReference type="EnsemblFungi" id="MGG_06393T0">
    <property type="protein sequence ID" value="MGG_06393T0"/>
    <property type="gene ID" value="MGG_06393"/>
</dbReference>
<dbReference type="GeneID" id="2684548"/>
<dbReference type="KEGG" id="mgr:MGG_06393"/>
<dbReference type="VEuPathDB" id="FungiDB:MGG_06393"/>
<dbReference type="eggNOG" id="KOG0595">
    <property type="taxonomic scope" value="Eukaryota"/>
</dbReference>
<dbReference type="HOGENOM" id="CLU_006447_0_0_1"/>
<dbReference type="InParanoid" id="Q52EB3"/>
<dbReference type="OMA" id="INNVVQW"/>
<dbReference type="OrthoDB" id="346907at2759"/>
<dbReference type="PHI-base" id="PHI:11533"/>
<dbReference type="PHI-base" id="PHI:2035"/>
<dbReference type="PHI-base" id="PHI:2069"/>
<dbReference type="PHI-base" id="PHI:8612"/>
<dbReference type="Proteomes" id="UP000009058">
    <property type="component" value="Chromosome 4"/>
</dbReference>
<dbReference type="GO" id="GO:1990316">
    <property type="term" value="C:Atg1/ULK1 kinase complex"/>
    <property type="evidence" value="ECO:0007669"/>
    <property type="project" value="EnsemblFungi"/>
</dbReference>
<dbReference type="GO" id="GO:0000421">
    <property type="term" value="C:autophagosome membrane"/>
    <property type="evidence" value="ECO:0007669"/>
    <property type="project" value="EnsemblFungi"/>
</dbReference>
<dbReference type="GO" id="GO:0005829">
    <property type="term" value="C:cytosol"/>
    <property type="evidence" value="ECO:0007669"/>
    <property type="project" value="EnsemblFungi"/>
</dbReference>
<dbReference type="GO" id="GO:0061908">
    <property type="term" value="C:phagophore"/>
    <property type="evidence" value="ECO:0007669"/>
    <property type="project" value="EnsemblFungi"/>
</dbReference>
<dbReference type="GO" id="GO:0034045">
    <property type="term" value="C:phagophore assembly site membrane"/>
    <property type="evidence" value="ECO:0007669"/>
    <property type="project" value="UniProtKB-SubCell"/>
</dbReference>
<dbReference type="GO" id="GO:0120095">
    <property type="term" value="C:vacuole-isolation membrane contact site"/>
    <property type="evidence" value="ECO:0007669"/>
    <property type="project" value="EnsemblFungi"/>
</dbReference>
<dbReference type="GO" id="GO:0005524">
    <property type="term" value="F:ATP binding"/>
    <property type="evidence" value="ECO:0007669"/>
    <property type="project" value="UniProtKB-KW"/>
</dbReference>
<dbReference type="GO" id="GO:0106310">
    <property type="term" value="F:protein serine kinase activity"/>
    <property type="evidence" value="ECO:0007669"/>
    <property type="project" value="RHEA"/>
</dbReference>
<dbReference type="GO" id="GO:0004674">
    <property type="term" value="F:protein serine/threonine kinase activity"/>
    <property type="evidence" value="ECO:0000315"/>
    <property type="project" value="PAMGO_MGG"/>
</dbReference>
<dbReference type="GO" id="GO:0075016">
    <property type="term" value="P:appressorium formation"/>
    <property type="evidence" value="ECO:0000315"/>
    <property type="project" value="PAMGO_MGG"/>
</dbReference>
<dbReference type="GO" id="GO:0048102">
    <property type="term" value="P:autophagic cell death"/>
    <property type="evidence" value="ECO:0000315"/>
    <property type="project" value="PAMGO_MGG"/>
</dbReference>
<dbReference type="GO" id="GO:0000422">
    <property type="term" value="P:autophagy of mitochondrion"/>
    <property type="evidence" value="ECO:0007669"/>
    <property type="project" value="EnsemblFungi"/>
</dbReference>
<dbReference type="GO" id="GO:0006995">
    <property type="term" value="P:cellular response to nitrogen starvation"/>
    <property type="evidence" value="ECO:0007669"/>
    <property type="project" value="EnsemblFungi"/>
</dbReference>
<dbReference type="GO" id="GO:0051365">
    <property type="term" value="P:cellular response to potassium ion starvation"/>
    <property type="evidence" value="ECO:0007669"/>
    <property type="project" value="EnsemblFungi"/>
</dbReference>
<dbReference type="GO" id="GO:0120164">
    <property type="term" value="P:conidium germination"/>
    <property type="evidence" value="ECO:0000315"/>
    <property type="project" value="UniProtKB"/>
</dbReference>
<dbReference type="GO" id="GO:0034727">
    <property type="term" value="P:piecemeal microautophagy of the nucleus"/>
    <property type="evidence" value="ECO:0007669"/>
    <property type="project" value="EnsemblFungi"/>
</dbReference>
<dbReference type="GO" id="GO:0075307">
    <property type="term" value="P:positive regulation of conidium formation"/>
    <property type="evidence" value="ECO:0000315"/>
    <property type="project" value="UniProtKB"/>
</dbReference>
<dbReference type="GO" id="GO:0034497">
    <property type="term" value="P:protein localization to phagophore assembly site"/>
    <property type="evidence" value="ECO:0007669"/>
    <property type="project" value="EnsemblFungi"/>
</dbReference>
<dbReference type="GO" id="GO:0015031">
    <property type="term" value="P:protein transport"/>
    <property type="evidence" value="ECO:0007669"/>
    <property type="project" value="UniProtKB-KW"/>
</dbReference>
<dbReference type="GO" id="GO:0010506">
    <property type="term" value="P:regulation of autophagy"/>
    <property type="evidence" value="ECO:0007669"/>
    <property type="project" value="InterPro"/>
</dbReference>
<dbReference type="GO" id="GO:0061709">
    <property type="term" value="P:reticulophagy"/>
    <property type="evidence" value="ECO:0007669"/>
    <property type="project" value="EnsemblFungi"/>
</dbReference>
<dbReference type="GO" id="GO:0009847">
    <property type="term" value="P:spore germination"/>
    <property type="evidence" value="ECO:0000315"/>
    <property type="project" value="PAMGO_MGG"/>
</dbReference>
<dbReference type="CDD" id="cd14009">
    <property type="entry name" value="STKc_ATG1_ULK_like"/>
    <property type="match status" value="1"/>
</dbReference>
<dbReference type="FunFam" id="3.30.200.20:FF:000042">
    <property type="entry name" value="Aurora kinase A"/>
    <property type="match status" value="1"/>
</dbReference>
<dbReference type="FunFam" id="1.10.510.10:FF:000817">
    <property type="entry name" value="Serine/threonine-protein kinase ATG1"/>
    <property type="match status" value="1"/>
</dbReference>
<dbReference type="Gene3D" id="1.10.510.10">
    <property type="entry name" value="Transferase(Phosphotransferase) domain 1"/>
    <property type="match status" value="1"/>
</dbReference>
<dbReference type="InterPro" id="IPR045269">
    <property type="entry name" value="Atg1-like"/>
</dbReference>
<dbReference type="InterPro" id="IPR048941">
    <property type="entry name" value="ATG1-like_MIT2"/>
</dbReference>
<dbReference type="InterPro" id="IPR022708">
    <property type="entry name" value="Atg1-like_tMIT"/>
</dbReference>
<dbReference type="InterPro" id="IPR011009">
    <property type="entry name" value="Kinase-like_dom_sf"/>
</dbReference>
<dbReference type="InterPro" id="IPR000719">
    <property type="entry name" value="Prot_kinase_dom"/>
</dbReference>
<dbReference type="InterPro" id="IPR017441">
    <property type="entry name" value="Protein_kinase_ATP_BS"/>
</dbReference>
<dbReference type="InterPro" id="IPR008271">
    <property type="entry name" value="Ser/Thr_kinase_AS"/>
</dbReference>
<dbReference type="PANTHER" id="PTHR24348:SF22">
    <property type="entry name" value="NON-SPECIFIC SERINE_THREONINE PROTEIN KINASE"/>
    <property type="match status" value="1"/>
</dbReference>
<dbReference type="PANTHER" id="PTHR24348">
    <property type="entry name" value="SERINE/THREONINE-PROTEIN KINASE UNC-51-RELATED"/>
    <property type="match status" value="1"/>
</dbReference>
<dbReference type="Pfam" id="PF12063">
    <property type="entry name" value="ATG1-like_MIT1"/>
    <property type="match status" value="1"/>
</dbReference>
<dbReference type="Pfam" id="PF21127">
    <property type="entry name" value="ATG1-like_MIT2"/>
    <property type="match status" value="1"/>
</dbReference>
<dbReference type="Pfam" id="PF00069">
    <property type="entry name" value="Pkinase"/>
    <property type="match status" value="1"/>
</dbReference>
<dbReference type="SMART" id="SM00220">
    <property type="entry name" value="S_TKc"/>
    <property type="match status" value="1"/>
</dbReference>
<dbReference type="SUPFAM" id="SSF56112">
    <property type="entry name" value="Protein kinase-like (PK-like)"/>
    <property type="match status" value="1"/>
</dbReference>
<dbReference type="PROSITE" id="PS00107">
    <property type="entry name" value="PROTEIN_KINASE_ATP"/>
    <property type="match status" value="1"/>
</dbReference>
<dbReference type="PROSITE" id="PS50011">
    <property type="entry name" value="PROTEIN_KINASE_DOM"/>
    <property type="match status" value="1"/>
</dbReference>
<dbReference type="PROSITE" id="PS00108">
    <property type="entry name" value="PROTEIN_KINASE_ST"/>
    <property type="match status" value="1"/>
</dbReference>
<proteinExistence type="evidence at protein level"/>
<keyword id="KW-0067">ATP-binding</keyword>
<keyword id="KW-0072">Autophagy</keyword>
<keyword id="KW-0963">Cytoplasm</keyword>
<keyword id="KW-0418">Kinase</keyword>
<keyword id="KW-0472">Membrane</keyword>
<keyword id="KW-0547">Nucleotide-binding</keyword>
<keyword id="KW-0653">Protein transport</keyword>
<keyword id="KW-1185">Reference proteome</keyword>
<keyword id="KW-0723">Serine/threonine-protein kinase</keyword>
<keyword id="KW-0808">Transferase</keyword>
<keyword id="KW-0813">Transport</keyword>
<feature type="chain" id="PRO_0000085648" description="Serine/threonine-protein kinase ATG1">
    <location>
        <begin position="1"/>
        <end position="982"/>
    </location>
</feature>
<feature type="domain" description="Protein kinase" evidence="2">
    <location>
        <begin position="19"/>
        <end position="324"/>
    </location>
</feature>
<feature type="region of interest" description="Disordered" evidence="4">
    <location>
        <begin position="334"/>
        <end position="506"/>
    </location>
</feature>
<feature type="region of interest" description="Disordered" evidence="4">
    <location>
        <begin position="813"/>
        <end position="834"/>
    </location>
</feature>
<feature type="region of interest" description="Disordered" evidence="4">
    <location>
        <begin position="898"/>
        <end position="918"/>
    </location>
</feature>
<feature type="region of interest" description="Disordered" evidence="4">
    <location>
        <begin position="947"/>
        <end position="982"/>
    </location>
</feature>
<feature type="compositionally biased region" description="Basic and acidic residues" evidence="4">
    <location>
        <begin position="335"/>
        <end position="359"/>
    </location>
</feature>
<feature type="compositionally biased region" description="Basic and acidic residues" evidence="4">
    <location>
        <begin position="372"/>
        <end position="387"/>
    </location>
</feature>
<feature type="compositionally biased region" description="Low complexity" evidence="4">
    <location>
        <begin position="388"/>
        <end position="398"/>
    </location>
</feature>
<feature type="compositionally biased region" description="Polar residues" evidence="4">
    <location>
        <begin position="463"/>
        <end position="481"/>
    </location>
</feature>
<feature type="active site" description="Proton acceptor" evidence="2 3">
    <location>
        <position position="162"/>
    </location>
</feature>
<feature type="binding site" evidence="2">
    <location>
        <begin position="25"/>
        <end position="33"/>
    </location>
    <ligand>
        <name>ATP</name>
        <dbReference type="ChEBI" id="CHEBI:30616"/>
    </ligand>
</feature>
<feature type="binding site" evidence="2">
    <location>
        <position position="48"/>
    </location>
    <ligand>
        <name>ATP</name>
        <dbReference type="ChEBI" id="CHEBI:30616"/>
    </ligand>
</feature>
<comment type="function">
    <text evidence="1 5">Serine/threonine protein kinase involved in the cytoplasm to vacuole transport (Cvt) and found to be essential in autophagy, where it is required for the formation of autophagosomes. Involved in the clearance of protein aggregates which cannot be efficiently cleared by the proteasome. Required for selective autophagic degradation of the nucleus (nucleophagy) as well as for mitophagy which contributes to regulate mitochondrial quantity and quality by eliminating the mitochondria to a basal level to fulfill cellular energy requirements and preventing excess ROS production. Also involved in endoplasmic reticulum-specific autophagic process, in selective removal of ER-associated degradation (ERAD) substrates. Plays a key role in ATG9 and ATG23 cycling through the pre-autophagosomal structure and is necessary to promote ATG18 binding to ATG9 through phosphorylation of ATG9. Catalyzes phosphorylation of ATG4, decreasing the interaction between ATG4 and ATG8 and impairing deconjugation of PE-conjugated forms of ATG8 (By similarity). Autophagy is essential to fungal development, production of appressorium turgor, and pathogenicity in rice blast disease (PubMed:17416896).</text>
</comment>
<comment type="catalytic activity">
    <reaction evidence="1">
        <text>L-seryl-[protein] + ATP = O-phospho-L-seryl-[protein] + ADP + H(+)</text>
        <dbReference type="Rhea" id="RHEA:17989"/>
        <dbReference type="Rhea" id="RHEA-COMP:9863"/>
        <dbReference type="Rhea" id="RHEA-COMP:11604"/>
        <dbReference type="ChEBI" id="CHEBI:15378"/>
        <dbReference type="ChEBI" id="CHEBI:29999"/>
        <dbReference type="ChEBI" id="CHEBI:30616"/>
        <dbReference type="ChEBI" id="CHEBI:83421"/>
        <dbReference type="ChEBI" id="CHEBI:456216"/>
        <dbReference type="EC" id="2.7.11.1"/>
    </reaction>
</comment>
<comment type="catalytic activity">
    <reaction evidence="1">
        <text>L-threonyl-[protein] + ATP = O-phospho-L-threonyl-[protein] + ADP + H(+)</text>
        <dbReference type="Rhea" id="RHEA:46608"/>
        <dbReference type="Rhea" id="RHEA-COMP:11060"/>
        <dbReference type="Rhea" id="RHEA-COMP:11605"/>
        <dbReference type="ChEBI" id="CHEBI:15378"/>
        <dbReference type="ChEBI" id="CHEBI:30013"/>
        <dbReference type="ChEBI" id="CHEBI:30616"/>
        <dbReference type="ChEBI" id="CHEBI:61977"/>
        <dbReference type="ChEBI" id="CHEBI:456216"/>
        <dbReference type="EC" id="2.7.11.1"/>
    </reaction>
</comment>
<comment type="subunit">
    <text evidence="1">Homodimer. Forms a ternary complex with ATG13 and ATG17.</text>
</comment>
<comment type="subcellular location">
    <subcellularLocation>
        <location evidence="5">Cytoplasm</location>
    </subcellularLocation>
    <subcellularLocation>
        <location evidence="1">Preautophagosomal structure membrane</location>
        <topology evidence="1">Peripheral membrane protein</topology>
    </subcellularLocation>
</comment>
<comment type="tissue specificity">
    <text evidence="5">Uniformly detected in conidia, mycelia and appressoria (at protein level).</text>
</comment>
<comment type="similarity">
    <text evidence="2">Belongs to the protein kinase superfamily. Ser/Thr protein kinase family. APG1/unc-51/ULK1 subfamily.</text>
</comment>
<reference key="1">
    <citation type="journal article" date="2007" name="Eukaryot. Cell">
        <title>Involvement of a Magnaporthe grisea serine/threonine kinase gene, MgATG1, in appressorium turgor and pathogenesis.</title>
        <authorList>
            <person name="Liu X.-H."/>
            <person name="Lu J.-P."/>
            <person name="Zhang L."/>
            <person name="Dong B."/>
            <person name="Min H."/>
            <person name="Lin F.-C."/>
        </authorList>
    </citation>
    <scope>NUCLEOTIDE SEQUENCE [MRNA]</scope>
    <scope>SUBCELLULAR LOCATION</scope>
    <scope>TISSUE SPECIFICITY</scope>
    <scope>FUNCTION</scope>
    <source>
        <strain>Guyane 11</strain>
    </source>
</reference>
<reference key="2">
    <citation type="journal article" date="2005" name="Nature">
        <title>The genome sequence of the rice blast fungus Magnaporthe grisea.</title>
        <authorList>
            <person name="Dean R.A."/>
            <person name="Talbot N.J."/>
            <person name="Ebbole D.J."/>
            <person name="Farman M.L."/>
            <person name="Mitchell T.K."/>
            <person name="Orbach M.J."/>
            <person name="Thon M.R."/>
            <person name="Kulkarni R."/>
            <person name="Xu J.-R."/>
            <person name="Pan H."/>
            <person name="Read N.D."/>
            <person name="Lee Y.-H."/>
            <person name="Carbone I."/>
            <person name="Brown D."/>
            <person name="Oh Y.Y."/>
            <person name="Donofrio N."/>
            <person name="Jeong J.S."/>
            <person name="Soanes D.M."/>
            <person name="Djonovic S."/>
            <person name="Kolomiets E."/>
            <person name="Rehmeyer C."/>
            <person name="Li W."/>
            <person name="Harding M."/>
            <person name="Kim S."/>
            <person name="Lebrun M.-H."/>
            <person name="Bohnert H."/>
            <person name="Coughlan S."/>
            <person name="Butler J."/>
            <person name="Calvo S.E."/>
            <person name="Ma L.-J."/>
            <person name="Nicol R."/>
            <person name="Purcell S."/>
            <person name="Nusbaum C."/>
            <person name="Galagan J.E."/>
            <person name="Birren B.W."/>
        </authorList>
    </citation>
    <scope>NUCLEOTIDE SEQUENCE [LARGE SCALE GENOMIC DNA]</scope>
    <source>
        <strain>70-15 / ATCC MYA-4617 / FGSC 8958</strain>
    </source>
</reference>